<dbReference type="EC" id="1.3.1.98" evidence="1"/>
<dbReference type="EMBL" id="CR954253">
    <property type="protein sequence ID" value="CAI97475.1"/>
    <property type="molecule type" value="Genomic_DNA"/>
</dbReference>
<dbReference type="RefSeq" id="WP_003618978.1">
    <property type="nucleotide sequence ID" value="NZ_JQAV01000001.1"/>
</dbReference>
<dbReference type="SMR" id="Q1GB18"/>
<dbReference type="STRING" id="390333.Ldb0646"/>
<dbReference type="KEGG" id="ldb:Ldb0646"/>
<dbReference type="PATRIC" id="fig|390333.13.peg.153"/>
<dbReference type="eggNOG" id="COG0812">
    <property type="taxonomic scope" value="Bacteria"/>
</dbReference>
<dbReference type="HOGENOM" id="CLU_035304_1_1_9"/>
<dbReference type="BioCyc" id="LDEL390333:LDB_RS02790-MONOMER"/>
<dbReference type="UniPathway" id="UPA00219"/>
<dbReference type="Proteomes" id="UP000001259">
    <property type="component" value="Chromosome"/>
</dbReference>
<dbReference type="GO" id="GO:0005829">
    <property type="term" value="C:cytosol"/>
    <property type="evidence" value="ECO:0007669"/>
    <property type="project" value="TreeGrafter"/>
</dbReference>
<dbReference type="GO" id="GO:0071949">
    <property type="term" value="F:FAD binding"/>
    <property type="evidence" value="ECO:0007669"/>
    <property type="project" value="InterPro"/>
</dbReference>
<dbReference type="GO" id="GO:0008762">
    <property type="term" value="F:UDP-N-acetylmuramate dehydrogenase activity"/>
    <property type="evidence" value="ECO:0007669"/>
    <property type="project" value="UniProtKB-UniRule"/>
</dbReference>
<dbReference type="GO" id="GO:0051301">
    <property type="term" value="P:cell division"/>
    <property type="evidence" value="ECO:0007669"/>
    <property type="project" value="UniProtKB-KW"/>
</dbReference>
<dbReference type="GO" id="GO:0071555">
    <property type="term" value="P:cell wall organization"/>
    <property type="evidence" value="ECO:0007669"/>
    <property type="project" value="UniProtKB-KW"/>
</dbReference>
<dbReference type="GO" id="GO:0009252">
    <property type="term" value="P:peptidoglycan biosynthetic process"/>
    <property type="evidence" value="ECO:0007669"/>
    <property type="project" value="UniProtKB-UniRule"/>
</dbReference>
<dbReference type="GO" id="GO:0008360">
    <property type="term" value="P:regulation of cell shape"/>
    <property type="evidence" value="ECO:0007669"/>
    <property type="project" value="UniProtKB-KW"/>
</dbReference>
<dbReference type="Gene3D" id="3.30.465.10">
    <property type="match status" value="1"/>
</dbReference>
<dbReference type="Gene3D" id="3.90.78.10">
    <property type="entry name" value="UDP-N-acetylenolpyruvoylglucosamine reductase, C-terminal domain"/>
    <property type="match status" value="1"/>
</dbReference>
<dbReference type="Gene3D" id="3.30.43.10">
    <property type="entry name" value="Uridine Diphospho-n-acetylenolpyruvylglucosamine Reductase, domain 2"/>
    <property type="match status" value="1"/>
</dbReference>
<dbReference type="HAMAP" id="MF_00037">
    <property type="entry name" value="MurB"/>
    <property type="match status" value="1"/>
</dbReference>
<dbReference type="InterPro" id="IPR016166">
    <property type="entry name" value="FAD-bd_PCMH"/>
</dbReference>
<dbReference type="InterPro" id="IPR036318">
    <property type="entry name" value="FAD-bd_PCMH-like_sf"/>
</dbReference>
<dbReference type="InterPro" id="IPR016167">
    <property type="entry name" value="FAD-bd_PCMH_sub1"/>
</dbReference>
<dbReference type="InterPro" id="IPR016169">
    <property type="entry name" value="FAD-bd_PCMH_sub2"/>
</dbReference>
<dbReference type="InterPro" id="IPR003170">
    <property type="entry name" value="MurB"/>
</dbReference>
<dbReference type="InterPro" id="IPR011601">
    <property type="entry name" value="MurB_C"/>
</dbReference>
<dbReference type="InterPro" id="IPR036635">
    <property type="entry name" value="MurB_C_sf"/>
</dbReference>
<dbReference type="InterPro" id="IPR006094">
    <property type="entry name" value="Oxid_FAD_bind_N"/>
</dbReference>
<dbReference type="NCBIfam" id="TIGR00179">
    <property type="entry name" value="murB"/>
    <property type="match status" value="1"/>
</dbReference>
<dbReference type="NCBIfam" id="NF010480">
    <property type="entry name" value="PRK13905.1"/>
    <property type="match status" value="1"/>
</dbReference>
<dbReference type="PANTHER" id="PTHR21071">
    <property type="entry name" value="UDP-N-ACETYLENOLPYRUVOYLGLUCOSAMINE REDUCTASE"/>
    <property type="match status" value="1"/>
</dbReference>
<dbReference type="PANTHER" id="PTHR21071:SF4">
    <property type="entry name" value="UDP-N-ACETYLENOLPYRUVOYLGLUCOSAMINE REDUCTASE"/>
    <property type="match status" value="1"/>
</dbReference>
<dbReference type="Pfam" id="PF01565">
    <property type="entry name" value="FAD_binding_4"/>
    <property type="match status" value="1"/>
</dbReference>
<dbReference type="Pfam" id="PF02873">
    <property type="entry name" value="MurB_C"/>
    <property type="match status" value="1"/>
</dbReference>
<dbReference type="SUPFAM" id="SSF56176">
    <property type="entry name" value="FAD-binding/transporter-associated domain-like"/>
    <property type="match status" value="1"/>
</dbReference>
<dbReference type="SUPFAM" id="SSF56194">
    <property type="entry name" value="Uridine diphospho-N-Acetylenolpyruvylglucosamine reductase, MurB, C-terminal domain"/>
    <property type="match status" value="1"/>
</dbReference>
<dbReference type="PROSITE" id="PS51387">
    <property type="entry name" value="FAD_PCMH"/>
    <property type="match status" value="1"/>
</dbReference>
<sequence length="297" mass="31906">MKLYDLKAQGLDLQENIPLSRYTFTQTGGPAEYLAFPKTLAELKELLAAAKEDQLPITVIGNASNLIIRDKGIKGLVIILTEMKEIKVEADKVHAQAGARIIDTSFAAGEAGLSGLEFAAGIPGSVGGAVFMNAGAYGGETKDCLESATVVTRDGEVKTYTNAELHFSYRHSLLQENDEIVIAATFALKAGDKATILDQMNYLNALRSYKQPLEYPSCGSVFKRPTGHFVGPMLIKAGLQGKQIGGAQVSTKHAGFIVNKGGATATDYLNLIHYIQKTIKEKDGIALQTEVRIIGEE</sequence>
<feature type="chain" id="PRO_1000002888" description="UDP-N-acetylenolpyruvoylglucosamine reductase">
    <location>
        <begin position="1"/>
        <end position="297"/>
    </location>
</feature>
<feature type="domain" description="FAD-binding PCMH-type" evidence="1">
    <location>
        <begin position="26"/>
        <end position="191"/>
    </location>
</feature>
<feature type="active site" evidence="1">
    <location>
        <position position="170"/>
    </location>
</feature>
<feature type="active site" description="Proton donor" evidence="1">
    <location>
        <position position="220"/>
    </location>
</feature>
<feature type="active site" evidence="1">
    <location>
        <position position="290"/>
    </location>
</feature>
<reference key="1">
    <citation type="journal article" date="2006" name="Proc. Natl. Acad. Sci. U.S.A.">
        <title>The complete genome sequence of Lactobacillus bulgaricus reveals extensive and ongoing reductive evolution.</title>
        <authorList>
            <person name="van de Guchte M."/>
            <person name="Penaud S."/>
            <person name="Grimaldi C."/>
            <person name="Barbe V."/>
            <person name="Bryson K."/>
            <person name="Nicolas P."/>
            <person name="Robert C."/>
            <person name="Oztas S."/>
            <person name="Mangenot S."/>
            <person name="Couloux A."/>
            <person name="Loux V."/>
            <person name="Dervyn R."/>
            <person name="Bossy R."/>
            <person name="Bolotin A."/>
            <person name="Batto J.-M."/>
            <person name="Walunas T."/>
            <person name="Gibrat J.-F."/>
            <person name="Bessieres P."/>
            <person name="Weissenbach J."/>
            <person name="Ehrlich S.D."/>
            <person name="Maguin E."/>
        </authorList>
    </citation>
    <scope>NUCLEOTIDE SEQUENCE [LARGE SCALE GENOMIC DNA]</scope>
    <source>
        <strain>ATCC 11842 / DSM 20081 / BCRC 10696 / JCM 1002 / NBRC 13953 / NCIMB 11778 / NCTC 12712 / WDCM 00102 / Lb 14</strain>
    </source>
</reference>
<accession>Q1GB18</accession>
<protein>
    <recommendedName>
        <fullName evidence="1">UDP-N-acetylenolpyruvoylglucosamine reductase</fullName>
        <ecNumber evidence="1">1.3.1.98</ecNumber>
    </recommendedName>
    <alternativeName>
        <fullName evidence="1">UDP-N-acetylmuramate dehydrogenase</fullName>
    </alternativeName>
</protein>
<proteinExistence type="inferred from homology"/>
<evidence type="ECO:0000255" key="1">
    <source>
        <dbReference type="HAMAP-Rule" id="MF_00037"/>
    </source>
</evidence>
<gene>
    <name evidence="1" type="primary">murB</name>
    <name type="ordered locus">Ldb0646</name>
</gene>
<keyword id="KW-0131">Cell cycle</keyword>
<keyword id="KW-0132">Cell division</keyword>
<keyword id="KW-0133">Cell shape</keyword>
<keyword id="KW-0961">Cell wall biogenesis/degradation</keyword>
<keyword id="KW-0963">Cytoplasm</keyword>
<keyword id="KW-0274">FAD</keyword>
<keyword id="KW-0285">Flavoprotein</keyword>
<keyword id="KW-0521">NADP</keyword>
<keyword id="KW-0560">Oxidoreductase</keyword>
<keyword id="KW-0573">Peptidoglycan synthesis</keyword>
<keyword id="KW-1185">Reference proteome</keyword>
<organism>
    <name type="scientific">Lactobacillus delbrueckii subsp. bulgaricus (strain ATCC 11842 / DSM 20081 / BCRC 10696 / JCM 1002 / NBRC 13953 / NCIMB 11778 / NCTC 12712 / WDCM 00102 / Lb 14)</name>
    <dbReference type="NCBI Taxonomy" id="390333"/>
    <lineage>
        <taxon>Bacteria</taxon>
        <taxon>Bacillati</taxon>
        <taxon>Bacillota</taxon>
        <taxon>Bacilli</taxon>
        <taxon>Lactobacillales</taxon>
        <taxon>Lactobacillaceae</taxon>
        <taxon>Lactobacillus</taxon>
    </lineage>
</organism>
<name>MURB_LACDA</name>
<comment type="function">
    <text evidence="1">Cell wall formation.</text>
</comment>
<comment type="catalytic activity">
    <reaction evidence="1">
        <text>UDP-N-acetyl-alpha-D-muramate + NADP(+) = UDP-N-acetyl-3-O-(1-carboxyvinyl)-alpha-D-glucosamine + NADPH + H(+)</text>
        <dbReference type="Rhea" id="RHEA:12248"/>
        <dbReference type="ChEBI" id="CHEBI:15378"/>
        <dbReference type="ChEBI" id="CHEBI:57783"/>
        <dbReference type="ChEBI" id="CHEBI:58349"/>
        <dbReference type="ChEBI" id="CHEBI:68483"/>
        <dbReference type="ChEBI" id="CHEBI:70757"/>
        <dbReference type="EC" id="1.3.1.98"/>
    </reaction>
</comment>
<comment type="cofactor">
    <cofactor evidence="1">
        <name>FAD</name>
        <dbReference type="ChEBI" id="CHEBI:57692"/>
    </cofactor>
</comment>
<comment type="pathway">
    <text evidence="1">Cell wall biogenesis; peptidoglycan biosynthesis.</text>
</comment>
<comment type="subcellular location">
    <subcellularLocation>
        <location evidence="1">Cytoplasm</location>
    </subcellularLocation>
</comment>
<comment type="similarity">
    <text evidence="1">Belongs to the MurB family.</text>
</comment>